<sequence>MDGKTDVKSLMAKFNTGSNPTEEVSTSSRPFKVAGQNSPSGIQSKKNLFDNQGNASPPAGPSNMSKFGTTKPPLAAKPTYEEKSEKEPKPPFLKPTGVSPRFGTQPNSVSRDPEVKVGFLKPVSPKPTSLTKEDSKPVILRPPGNKLHNLNQESDLKTLGPKPGSTPPVPENDLKPGFSKIAGAKSKFMPAPQDADSKPRFPRHTYGQKPSLSTEDAQEEESIPKNTPVQKGSPVQLGAKSRGSPFKPAKEDPEDKDHGTPSSPFAGVVLKPAASRGSPGLSKNSEEKKEERKTDIPKNIFLNKLNQEEPARFPKAPSKLTAGTPWGQSQEKEGDKDSATPKQKPLPPLSVLGPPPSKPSRPPNVDLTRFRKADSANSSNKSQTPYSTTSLPPPPPTQPASQPPLPASHPAHLPAPSLPPRNIKPPLDLKHPINEENQDGVMHSDGTGNLEEEQESDGEMYEDIESSKERDKKREKEEKKRLELERKEQKEREKKEQELRKKFKLTGPIQVIHHAKACCDVKGGKNELSFKQGEDIEIIRITDNPEGKWLGRTARGSYGYIKTTAVKIDYDSLKRKKNTINAVPPRPVEEDQDVYDDVAEQDAPNSHSQSGSGGMFPPPPADDDIYDGIEEEDADDGSVPQVDEKTNAWSWGILKMLKGKDERKKSIREKPKVSESDSNEGSSFPSPHKQLDVGEEVYDDVDASDFPPPPAEMSQGMSVGKTKAEEKDPKKLKKQEKEEKDLRKKFKYDGEIRVLYSTKVASSLTSKKWGTRDLQIKPGESLEVIQSTDDTKVLCRNEEGKYGYVLRSYLVDNDGEIYDDIADGCIYDND</sequence>
<name>FYB1_RAT</name>
<dbReference type="EMBL" id="AABR07008397">
    <property type="status" value="NOT_ANNOTATED_CDS"/>
    <property type="molecule type" value="Genomic_DNA"/>
</dbReference>
<dbReference type="RefSeq" id="XP_006232081.1">
    <property type="nucleotide sequence ID" value="XM_006232019.5"/>
</dbReference>
<dbReference type="SMR" id="D3ZIE4"/>
<dbReference type="FunCoup" id="D3ZIE4">
    <property type="interactions" value="630"/>
</dbReference>
<dbReference type="STRING" id="10116.ENSRNOP00000018634"/>
<dbReference type="GlyGen" id="D3ZIE4">
    <property type="glycosylation" value="2 sites"/>
</dbReference>
<dbReference type="iPTMnet" id="D3ZIE4"/>
<dbReference type="PhosphoSitePlus" id="D3ZIE4"/>
<dbReference type="PaxDb" id="10116-ENSRNOP00000018634"/>
<dbReference type="PeptideAtlas" id="D3ZIE4"/>
<dbReference type="Ensembl" id="ENSRNOT00000018634.7">
    <property type="protein sequence ID" value="ENSRNOP00000018634.6"/>
    <property type="gene ID" value="ENSRNOG00000013886.8"/>
</dbReference>
<dbReference type="GeneID" id="499537"/>
<dbReference type="UCSC" id="RGD:1563421">
    <property type="organism name" value="rat"/>
</dbReference>
<dbReference type="AGR" id="RGD:1563421"/>
<dbReference type="CTD" id="2533"/>
<dbReference type="RGD" id="1563421">
    <property type="gene designation" value="Fyb1"/>
</dbReference>
<dbReference type="eggNOG" id="ENOG502QTTQ">
    <property type="taxonomic scope" value="Eukaryota"/>
</dbReference>
<dbReference type="GeneTree" id="ENSGT00530000063460"/>
<dbReference type="HOGENOM" id="CLU_339375_0_0_1"/>
<dbReference type="InParanoid" id="D3ZIE4"/>
<dbReference type="OMA" id="KSSTWSW"/>
<dbReference type="OrthoDB" id="9396701at2759"/>
<dbReference type="TreeFam" id="TF337003"/>
<dbReference type="Reactome" id="R-RNO-202433">
    <property type="pathway name" value="Generation of second messenger molecules"/>
</dbReference>
<dbReference type="Reactome" id="R-RNO-391160">
    <property type="pathway name" value="Signal regulatory protein family interactions"/>
</dbReference>
<dbReference type="PRO" id="PR:D3ZIE4"/>
<dbReference type="Proteomes" id="UP000002494">
    <property type="component" value="Chromosome 2"/>
</dbReference>
<dbReference type="Bgee" id="ENSRNOG00000013886">
    <property type="expression patterns" value="Expressed in thymus and 18 other cell types or tissues"/>
</dbReference>
<dbReference type="GO" id="GO:0070161">
    <property type="term" value="C:anchoring junction"/>
    <property type="evidence" value="ECO:0007669"/>
    <property type="project" value="UniProtKB-SubCell"/>
</dbReference>
<dbReference type="GO" id="GO:0005737">
    <property type="term" value="C:cytoplasm"/>
    <property type="evidence" value="ECO:0007669"/>
    <property type="project" value="UniProtKB-SubCell"/>
</dbReference>
<dbReference type="GO" id="GO:0005634">
    <property type="term" value="C:nucleus"/>
    <property type="evidence" value="ECO:0007669"/>
    <property type="project" value="UniProtKB-SubCell"/>
</dbReference>
<dbReference type="GO" id="GO:0005886">
    <property type="term" value="C:plasma membrane"/>
    <property type="evidence" value="ECO:0000266"/>
    <property type="project" value="RGD"/>
</dbReference>
<dbReference type="GO" id="GO:0032991">
    <property type="term" value="C:protein-containing complex"/>
    <property type="evidence" value="ECO:0000266"/>
    <property type="project" value="RGD"/>
</dbReference>
<dbReference type="GO" id="GO:0008289">
    <property type="term" value="F:lipid binding"/>
    <property type="evidence" value="ECO:0007669"/>
    <property type="project" value="InterPro"/>
</dbReference>
<dbReference type="GO" id="GO:0044877">
    <property type="term" value="F:protein-containing complex binding"/>
    <property type="evidence" value="ECO:0000353"/>
    <property type="project" value="RGD"/>
</dbReference>
<dbReference type="GO" id="GO:0007229">
    <property type="term" value="P:integrin-mediated signaling pathway"/>
    <property type="evidence" value="ECO:0000318"/>
    <property type="project" value="GO_Central"/>
</dbReference>
<dbReference type="GO" id="GO:0072659">
    <property type="term" value="P:protein localization to plasma membrane"/>
    <property type="evidence" value="ECO:0000266"/>
    <property type="project" value="RGD"/>
</dbReference>
<dbReference type="GO" id="GO:0050852">
    <property type="term" value="P:T cell receptor signaling pathway"/>
    <property type="evidence" value="ECO:0000318"/>
    <property type="project" value="GO_Central"/>
</dbReference>
<dbReference type="CDD" id="cd11867">
    <property type="entry name" value="hSH3_ADAP"/>
    <property type="match status" value="1"/>
</dbReference>
<dbReference type="FunFam" id="2.30.30.40:FF:000156">
    <property type="entry name" value="FYN-binding protein-like isoform X1"/>
    <property type="match status" value="1"/>
</dbReference>
<dbReference type="FunFam" id="2.30.30.40:FF:000133">
    <property type="entry name" value="FYN-binding protein-like isoform X2"/>
    <property type="match status" value="1"/>
</dbReference>
<dbReference type="Gene3D" id="2.30.30.40">
    <property type="entry name" value="SH3 Domains"/>
    <property type="match status" value="2"/>
</dbReference>
<dbReference type="InterPro" id="IPR043443">
    <property type="entry name" value="FYB1/2-like"/>
</dbReference>
<dbReference type="InterPro" id="IPR035540">
    <property type="entry name" value="FYB_hSH3"/>
</dbReference>
<dbReference type="InterPro" id="IPR029294">
    <property type="entry name" value="hSH3"/>
</dbReference>
<dbReference type="InterPro" id="IPR036028">
    <property type="entry name" value="SH3-like_dom_sf"/>
</dbReference>
<dbReference type="InterPro" id="IPR001452">
    <property type="entry name" value="SH3_domain"/>
</dbReference>
<dbReference type="PANTHER" id="PTHR16830:SF13">
    <property type="entry name" value="FYN-BINDING PROTEIN 1"/>
    <property type="match status" value="1"/>
</dbReference>
<dbReference type="PANTHER" id="PTHR16830">
    <property type="entry name" value="SH2 CONTAINING ADAPTOR PRAM-1 RELATED"/>
    <property type="match status" value="1"/>
</dbReference>
<dbReference type="Pfam" id="PF14603">
    <property type="entry name" value="hSH3"/>
    <property type="match status" value="1"/>
</dbReference>
<dbReference type="Pfam" id="PF07653">
    <property type="entry name" value="SH3_2"/>
    <property type="match status" value="1"/>
</dbReference>
<dbReference type="SMART" id="SM00326">
    <property type="entry name" value="SH3"/>
    <property type="match status" value="1"/>
</dbReference>
<dbReference type="SUPFAM" id="SSF50044">
    <property type="entry name" value="SH3-domain"/>
    <property type="match status" value="2"/>
</dbReference>
<dbReference type="PROSITE" id="PS50002">
    <property type="entry name" value="SH3"/>
    <property type="match status" value="2"/>
</dbReference>
<feature type="chain" id="PRO_0000448484" description="FYN-binding protein 1">
    <location>
        <begin position="1"/>
        <end position="830"/>
    </location>
</feature>
<feature type="domain" description="SH3 1" evidence="4">
    <location>
        <begin position="510"/>
        <end position="571"/>
    </location>
</feature>
<feature type="domain" description="SH3 2" evidence="4">
    <location>
        <begin position="747"/>
        <end position="815"/>
    </location>
</feature>
<feature type="region of interest" description="Disordered" evidence="6">
    <location>
        <begin position="1"/>
        <end position="501"/>
    </location>
</feature>
<feature type="region of interest" description="Interaction with SKAP1" evidence="1">
    <location>
        <begin position="347"/>
        <end position="447"/>
    </location>
</feature>
<feature type="region of interest" description="Disordered" evidence="6">
    <location>
        <begin position="601"/>
        <end position="646"/>
    </location>
</feature>
<feature type="region of interest" description="Disordered" evidence="6">
    <location>
        <begin position="660"/>
        <end position="739"/>
    </location>
</feature>
<feature type="coiled-coil region" evidence="3">
    <location>
        <begin position="465"/>
        <end position="502"/>
    </location>
</feature>
<feature type="short sequence motif" description="SH2-binding" evidence="3">
    <location>
        <begin position="461"/>
        <end position="464"/>
    </location>
</feature>
<feature type="short sequence motif" description="Nuclear localization signal" evidence="5">
    <location>
        <begin position="479"/>
        <end position="486"/>
    </location>
</feature>
<feature type="short sequence motif" description="SH2-binding; to LCP2" evidence="1">
    <location>
        <begin position="595"/>
        <end position="598"/>
    </location>
</feature>
<feature type="short sequence motif" description="SH2-binding; to FYN" evidence="1">
    <location>
        <begin position="626"/>
        <end position="629"/>
    </location>
</feature>
<feature type="short sequence motif" description="Nuclear localization signal" evidence="5">
    <location>
        <begin position="732"/>
        <end position="739"/>
    </location>
</feature>
<feature type="compositionally biased region" description="Polar residues" evidence="6">
    <location>
        <begin position="15"/>
        <end position="55"/>
    </location>
</feature>
<feature type="compositionally biased region" description="Basic and acidic residues" evidence="6">
    <location>
        <begin position="79"/>
        <end position="89"/>
    </location>
</feature>
<feature type="compositionally biased region" description="Basic and acidic residues" evidence="6">
    <location>
        <begin position="248"/>
        <end position="259"/>
    </location>
</feature>
<feature type="compositionally biased region" description="Basic and acidic residues" evidence="6">
    <location>
        <begin position="284"/>
        <end position="296"/>
    </location>
</feature>
<feature type="compositionally biased region" description="Basic and acidic residues" evidence="6">
    <location>
        <begin position="330"/>
        <end position="339"/>
    </location>
</feature>
<feature type="compositionally biased region" description="Pro residues" evidence="6">
    <location>
        <begin position="344"/>
        <end position="362"/>
    </location>
</feature>
<feature type="compositionally biased region" description="Pro residues" evidence="6">
    <location>
        <begin position="391"/>
        <end position="407"/>
    </location>
</feature>
<feature type="compositionally biased region" description="Acidic residues" evidence="6">
    <location>
        <begin position="450"/>
        <end position="464"/>
    </location>
</feature>
<feature type="compositionally biased region" description="Basic and acidic residues" evidence="6">
    <location>
        <begin position="465"/>
        <end position="500"/>
    </location>
</feature>
<feature type="compositionally biased region" description="Acidic residues" evidence="6">
    <location>
        <begin position="621"/>
        <end position="636"/>
    </location>
</feature>
<feature type="compositionally biased region" description="Basic and acidic residues" evidence="6">
    <location>
        <begin position="660"/>
        <end position="675"/>
    </location>
</feature>
<feature type="compositionally biased region" description="Acidic residues" evidence="6">
    <location>
        <begin position="693"/>
        <end position="703"/>
    </location>
</feature>
<feature type="compositionally biased region" description="Basic and acidic residues" evidence="6">
    <location>
        <begin position="722"/>
        <end position="739"/>
    </location>
</feature>
<feature type="modified residue" description="N6-acetyllysine" evidence="1">
    <location>
        <position position="13"/>
    </location>
</feature>
<feature type="modified residue" description="Phosphoserine" evidence="2">
    <location>
        <position position="38"/>
    </location>
</feature>
<feature type="modified residue" description="Phosphoserine" evidence="1">
    <location>
        <position position="56"/>
    </location>
</feature>
<feature type="modified residue" description="Phosphoserine" evidence="1">
    <location>
        <position position="233"/>
    </location>
</feature>
<feature type="modified residue" description="Phosphoserine" evidence="1">
    <location>
        <position position="329"/>
    </location>
</feature>
<feature type="modified residue" description="Phosphoserine" evidence="1">
    <location>
        <position position="456"/>
    </location>
</feature>
<feature type="modified residue" description="Phosphotyrosine" evidence="1">
    <location>
        <position position="570"/>
    </location>
</feature>
<feature type="modified residue" description="Phosphoserine" evidence="1">
    <location>
        <position position="572"/>
    </location>
</feature>
<feature type="modified residue" description="Phosphotyrosine" evidence="1">
    <location>
        <position position="698"/>
    </location>
</feature>
<gene>
    <name evidence="10" type="primary">Fyb1</name>
    <name evidence="10" type="synonym">Fyb</name>
</gene>
<evidence type="ECO:0000250" key="1">
    <source>
        <dbReference type="UniProtKB" id="O15117"/>
    </source>
</evidence>
<evidence type="ECO:0000250" key="2">
    <source>
        <dbReference type="UniProtKB" id="O35601"/>
    </source>
</evidence>
<evidence type="ECO:0000255" key="3"/>
<evidence type="ECO:0000255" key="4">
    <source>
        <dbReference type="PROSITE-ProRule" id="PRU00192"/>
    </source>
</evidence>
<evidence type="ECO:0000255" key="5">
    <source>
        <dbReference type="PROSITE-ProRule" id="PRU00768"/>
    </source>
</evidence>
<evidence type="ECO:0000256" key="6">
    <source>
        <dbReference type="SAM" id="MobiDB-lite"/>
    </source>
</evidence>
<evidence type="ECO:0000269" key="7">
    <source>
    </source>
</evidence>
<evidence type="ECO:0000303" key="8">
    <source>
    </source>
</evidence>
<evidence type="ECO:0000312" key="9">
    <source>
        <dbReference type="Proteomes" id="UP000002494"/>
    </source>
</evidence>
<evidence type="ECO:0000312" key="10">
    <source>
        <dbReference type="RGD" id="1563421"/>
    </source>
</evidence>
<evidence type="ECO:0007744" key="11">
    <source>
    </source>
</evidence>
<reference evidence="9" key="1">
    <citation type="journal article" date="2004" name="Nature">
        <title>Genome sequence of the Brown Norway rat yields insights into mammalian evolution.</title>
        <authorList>
            <person name="Gibbs R.A."/>
            <person name="Weinstock G.M."/>
            <person name="Metzker M.L."/>
            <person name="Muzny D.M."/>
            <person name="Sodergren E.J."/>
            <person name="Scherer S."/>
            <person name="Scott G."/>
            <person name="Steffen D."/>
            <person name="Worley K.C."/>
            <person name="Burch P.E."/>
            <person name="Okwuonu G."/>
            <person name="Hines S."/>
            <person name="Lewis L."/>
            <person name="Deramo C."/>
            <person name="Delgado O."/>
            <person name="Dugan-Rocha S."/>
            <person name="Miner G."/>
            <person name="Morgan M."/>
            <person name="Hawes A."/>
            <person name="Gill R."/>
            <person name="Holt R.A."/>
            <person name="Adams M.D."/>
            <person name="Amanatides P.G."/>
            <person name="Baden-Tillson H."/>
            <person name="Barnstead M."/>
            <person name="Chin S."/>
            <person name="Evans C.A."/>
            <person name="Ferriera S."/>
            <person name="Fosler C."/>
            <person name="Glodek A."/>
            <person name="Gu Z."/>
            <person name="Jennings D."/>
            <person name="Kraft C.L."/>
            <person name="Nguyen T."/>
            <person name="Pfannkoch C.M."/>
            <person name="Sitter C."/>
            <person name="Sutton G.G."/>
            <person name="Venter J.C."/>
            <person name="Woodage T."/>
            <person name="Smith D."/>
            <person name="Lee H.-M."/>
            <person name="Gustafson E."/>
            <person name="Cahill P."/>
            <person name="Kana A."/>
            <person name="Doucette-Stamm L."/>
            <person name="Weinstock K."/>
            <person name="Fechtel K."/>
            <person name="Weiss R.B."/>
            <person name="Dunn D.M."/>
            <person name="Green E.D."/>
            <person name="Blakesley R.W."/>
            <person name="Bouffard G.G."/>
            <person name="De Jong P.J."/>
            <person name="Osoegawa K."/>
            <person name="Zhu B."/>
            <person name="Marra M."/>
            <person name="Schein J."/>
            <person name="Bosdet I."/>
            <person name="Fjell C."/>
            <person name="Jones S."/>
            <person name="Krzywinski M."/>
            <person name="Mathewson C."/>
            <person name="Siddiqui A."/>
            <person name="Wye N."/>
            <person name="McPherson J."/>
            <person name="Zhao S."/>
            <person name="Fraser C.M."/>
            <person name="Shetty J."/>
            <person name="Shatsman S."/>
            <person name="Geer K."/>
            <person name="Chen Y."/>
            <person name="Abramzon S."/>
            <person name="Nierman W.C."/>
            <person name="Havlak P.H."/>
            <person name="Chen R."/>
            <person name="Durbin K.J."/>
            <person name="Egan A."/>
            <person name="Ren Y."/>
            <person name="Song X.-Z."/>
            <person name="Li B."/>
            <person name="Liu Y."/>
            <person name="Qin X."/>
            <person name="Cawley S."/>
            <person name="Cooney A.J."/>
            <person name="D'Souza L.M."/>
            <person name="Martin K."/>
            <person name="Wu J.Q."/>
            <person name="Gonzalez-Garay M.L."/>
            <person name="Jackson A.R."/>
            <person name="Kalafus K.J."/>
            <person name="McLeod M.P."/>
            <person name="Milosavljevic A."/>
            <person name="Virk D."/>
            <person name="Volkov A."/>
            <person name="Wheeler D.A."/>
            <person name="Zhang Z."/>
            <person name="Bailey J.A."/>
            <person name="Eichler E.E."/>
            <person name="Tuzun E."/>
            <person name="Birney E."/>
            <person name="Mongin E."/>
            <person name="Ureta-Vidal A."/>
            <person name="Woodwark C."/>
            <person name="Zdobnov E."/>
            <person name="Bork P."/>
            <person name="Suyama M."/>
            <person name="Torrents D."/>
            <person name="Alexandersson M."/>
            <person name="Trask B.J."/>
            <person name="Young J.M."/>
            <person name="Huang H."/>
            <person name="Wang H."/>
            <person name="Xing H."/>
            <person name="Daniels S."/>
            <person name="Gietzen D."/>
            <person name="Schmidt J."/>
            <person name="Stevens K."/>
            <person name="Vitt U."/>
            <person name="Wingrove J."/>
            <person name="Camara F."/>
            <person name="Mar Alba M."/>
            <person name="Abril J.F."/>
            <person name="Guigo R."/>
            <person name="Smit A."/>
            <person name="Dubchak I."/>
            <person name="Rubin E.M."/>
            <person name="Couronne O."/>
            <person name="Poliakov A."/>
            <person name="Huebner N."/>
            <person name="Ganten D."/>
            <person name="Goesele C."/>
            <person name="Hummel O."/>
            <person name="Kreitler T."/>
            <person name="Lee Y.-A."/>
            <person name="Monti J."/>
            <person name="Schulz H."/>
            <person name="Zimdahl H."/>
            <person name="Himmelbauer H."/>
            <person name="Lehrach H."/>
            <person name="Jacob H.J."/>
            <person name="Bromberg S."/>
            <person name="Gullings-Handley J."/>
            <person name="Jensen-Seaman M.I."/>
            <person name="Kwitek A.E."/>
            <person name="Lazar J."/>
            <person name="Pasko D."/>
            <person name="Tonellato P.J."/>
            <person name="Twigger S."/>
            <person name="Ponting C.P."/>
            <person name="Duarte J.M."/>
            <person name="Rice S."/>
            <person name="Goodstadt L."/>
            <person name="Beatson S.A."/>
            <person name="Emes R.D."/>
            <person name="Winter E.E."/>
            <person name="Webber C."/>
            <person name="Brandt P."/>
            <person name="Nyakatura G."/>
            <person name="Adetobi M."/>
            <person name="Chiaromonte F."/>
            <person name="Elnitski L."/>
            <person name="Eswara P."/>
            <person name="Hardison R.C."/>
            <person name="Hou M."/>
            <person name="Kolbe D."/>
            <person name="Makova K."/>
            <person name="Miller W."/>
            <person name="Nekrutenko A."/>
            <person name="Riemer C."/>
            <person name="Schwartz S."/>
            <person name="Taylor J."/>
            <person name="Yang S."/>
            <person name="Zhang Y."/>
            <person name="Lindpaintner K."/>
            <person name="Andrews T.D."/>
            <person name="Caccamo M."/>
            <person name="Clamp M."/>
            <person name="Clarke L."/>
            <person name="Curwen V."/>
            <person name="Durbin R.M."/>
            <person name="Eyras E."/>
            <person name="Searle S.M."/>
            <person name="Cooper G.M."/>
            <person name="Batzoglou S."/>
            <person name="Brudno M."/>
            <person name="Sidow A."/>
            <person name="Stone E.A."/>
            <person name="Payseur B.A."/>
            <person name="Bourque G."/>
            <person name="Lopez-Otin C."/>
            <person name="Puente X.S."/>
            <person name="Chakrabarti K."/>
            <person name="Chatterji S."/>
            <person name="Dewey C."/>
            <person name="Pachter L."/>
            <person name="Bray N."/>
            <person name="Yap V.B."/>
            <person name="Caspi A."/>
            <person name="Tesler G."/>
            <person name="Pevzner P.A."/>
            <person name="Haussler D."/>
            <person name="Roskin K.M."/>
            <person name="Baertsch R."/>
            <person name="Clawson H."/>
            <person name="Furey T.S."/>
            <person name="Hinrichs A.S."/>
            <person name="Karolchik D."/>
            <person name="Kent W.J."/>
            <person name="Rosenbloom K.R."/>
            <person name="Trumbower H."/>
            <person name="Weirauch M."/>
            <person name="Cooper D.N."/>
            <person name="Stenson P.D."/>
            <person name="Ma B."/>
            <person name="Brent M."/>
            <person name="Arumugam M."/>
            <person name="Shteynberg D."/>
            <person name="Copley R.R."/>
            <person name="Taylor M.S."/>
            <person name="Riethman H."/>
            <person name="Mudunuri U."/>
            <person name="Peterson J."/>
            <person name="Guyer M."/>
            <person name="Felsenfeld A."/>
            <person name="Old S."/>
            <person name="Mockrin S."/>
            <person name="Collins F.S."/>
        </authorList>
    </citation>
    <scope>NUCLEOTIDE SEQUENCE [LARGE SCALE GENOMIC DNA]</scope>
    <source>
        <strain evidence="9">Brown Norway</strain>
    </source>
</reference>
<reference key="2">
    <citation type="journal article" date="2003" name="FEBS Lett.">
        <title>Targeting of MIST to Src-family kinases via SKAP55-SLAP-130 adaptor complex in mast cells(1).</title>
        <authorList>
            <person name="Fujii Y."/>
            <person name="Wakahara S."/>
            <person name="Nakao T."/>
            <person name="Hara T."/>
            <person name="Ohtake H."/>
            <person name="Komurasaki T."/>
            <person name="Kitamura K."/>
            <person name="Tatsuno A."/>
            <person name="Fujiwara N."/>
            <person name="Hozumi N."/>
            <person name="Ra C."/>
            <person name="Kitamura D."/>
            <person name="Goitsuka R."/>
        </authorList>
    </citation>
    <scope>PROTEIN SEQUENCE OF 14-23; 68-77; 749-758 AND 769-776</scope>
    <scope>FUNCTION</scope>
    <scope>INTERACTION WITH SKAP1</scope>
    <scope>IDENTIFICATION IN A COMPLEX WITH SKAP1 AND CLNK</scope>
</reference>
<reference evidence="11" key="3">
    <citation type="journal article" date="2012" name="Nat. Commun.">
        <title>Quantitative maps of protein phosphorylation sites across 14 different rat organs and tissues.</title>
        <authorList>
            <person name="Lundby A."/>
            <person name="Secher A."/>
            <person name="Lage K."/>
            <person name="Nordsborg N.B."/>
            <person name="Dmytriyev A."/>
            <person name="Lundby C."/>
            <person name="Olsen J.V."/>
        </authorList>
    </citation>
    <scope>IDENTIFICATION BY MASS SPECTROMETRY [LARGE SCALE ANALYSIS]</scope>
</reference>
<protein>
    <recommendedName>
        <fullName evidence="1">FYN-binding protein 1</fullName>
    </recommendedName>
    <alternativeName>
        <fullName evidence="1">Adhesion and degranulation promoting adaptor protein</fullName>
        <shortName evidence="1">ADAP</shortName>
    </alternativeName>
    <alternativeName>
        <fullName evidence="1">FYB-120/130</fullName>
        <shortName evidence="1">p120/p130</shortName>
    </alternativeName>
    <alternativeName>
        <fullName evidence="1">FYN-T-binding protein</fullName>
    </alternativeName>
    <alternativeName>
        <fullName evidence="8">SLAP-130</fullName>
    </alternativeName>
    <alternativeName>
        <fullName evidence="1">SLP-76-associated phosphoprotein</fullName>
    </alternativeName>
</protein>
<proteinExistence type="evidence at protein level"/>
<organism>
    <name type="scientific">Rattus norvegicus</name>
    <name type="common">Rat</name>
    <dbReference type="NCBI Taxonomy" id="10116"/>
    <lineage>
        <taxon>Eukaryota</taxon>
        <taxon>Metazoa</taxon>
        <taxon>Chordata</taxon>
        <taxon>Craniata</taxon>
        <taxon>Vertebrata</taxon>
        <taxon>Euteleostomi</taxon>
        <taxon>Mammalia</taxon>
        <taxon>Eutheria</taxon>
        <taxon>Euarchontoglires</taxon>
        <taxon>Glires</taxon>
        <taxon>Rodentia</taxon>
        <taxon>Myomorpha</taxon>
        <taxon>Muroidea</taxon>
        <taxon>Muridae</taxon>
        <taxon>Murinae</taxon>
        <taxon>Rattus</taxon>
    </lineage>
</organism>
<keyword id="KW-0007">Acetylation</keyword>
<keyword id="KW-0965">Cell junction</keyword>
<keyword id="KW-0175">Coiled coil</keyword>
<keyword id="KW-0963">Cytoplasm</keyword>
<keyword id="KW-0903">Direct protein sequencing</keyword>
<keyword id="KW-0539">Nucleus</keyword>
<keyword id="KW-0597">Phosphoprotein</keyword>
<keyword id="KW-1185">Reference proteome</keyword>
<keyword id="KW-0677">Repeat</keyword>
<keyword id="KW-0728">SH3 domain</keyword>
<comment type="function">
    <text evidence="1 2 7">Acts as an adapter protein of the FYN and LCP2 signaling cascades in T-cells (By similarity). May play a role in linking T-cell signaling to remodeling of the actin cytoskeleton (By similarity). Modulates the expression of IL2 (By similarity). Involved in platelet activation (By similarity). Prevents the degradation of SKAP1 and SKAP2 (By similarity). May be involved in high affinity immunoglobulin epsilon receptor signaling in mast cells (PubMed:12681493).</text>
</comment>
<comment type="subunit">
    <text evidence="1 2 7">Part of a complex consisting of SKAP2, FYB1 and PTPNS1 (By similarity). Part of a complex consisting of SKAP2, FYB1 and LILRB3 (By similarity). Part of a complex consisting of SKAP1, FYB1 and CLNK (PubMed:12681493). Interacts with CLNK (via its SH2 domain) and FYN; this interaction allows SKAP1 and FYB1 to recruit FYN to the complex, thus promoting the phosphorylation of CLNK by FYN (By similarity). Interacts with FYN (By similarity). Interacts with LCP2 (By similarity). Interacts with SKAP1 (PubMed:12681493). Interacts with SKAP2 (By similarity). Interacts with FASLG (By similarity). Interacts with EVL (By similarity). Interacts with TMEM47 (By similarity). Interacts with LCK (By similarity).</text>
</comment>
<comment type="subcellular location">
    <subcellularLocation>
        <location evidence="1">Cytoplasm</location>
    </subcellularLocation>
    <subcellularLocation>
        <location evidence="5">Nucleus</location>
    </subcellularLocation>
    <subcellularLocation>
        <location evidence="2">Cell junction</location>
    </subcellularLocation>
    <text evidence="2">Colocalizes with TMEM47 at cell-cell contacts in podocytes.</text>
</comment>
<comment type="PTM">
    <text>T-cell receptor ligation leads to increased tyrosine phosphorylation.</text>
</comment>
<accession>D3ZIE4</accession>